<sequence length="272" mass="31717">MVEYWTLDRFEIGRLLGRGKFGQVWLAREREKGFIVALKIIPIKEIQTVETARQIRREIEIHSNLKHPNILRMYGHFHDKDNIYLILEYAGKGEFFKFLSDRGGKFGEKETSLYIRQVMLALTYMKECNVIHRDIKPENLLLGSDNQLKIADFGWAVYNADKRRMTFCGTMEYLAPEMVNNDIHDSGIDLWCLGILTYEFLMGKTPFESKNRNMREAYKKINSLKYTIPETISSNASDFISRLLVLSPGDRMELTEALNHPFIVKHHGRSSD</sequence>
<organism>
    <name type="scientific">Encephalitozoon cuniculi (strain GB-M1)</name>
    <name type="common">Microsporidian parasite</name>
    <dbReference type="NCBI Taxonomy" id="284813"/>
    <lineage>
        <taxon>Eukaryota</taxon>
        <taxon>Fungi</taxon>
        <taxon>Fungi incertae sedis</taxon>
        <taxon>Microsporidia</taxon>
        <taxon>Unikaryonidae</taxon>
        <taxon>Encephalitozoon</taxon>
    </lineage>
</organism>
<protein>
    <recommendedName>
        <fullName>Aurora kinase</fullName>
        <ecNumber evidence="3">2.7.11.1</ecNumber>
    </recommendedName>
    <alternativeName>
        <fullName>Spindle assembly checkpoint kinase</fullName>
    </alternativeName>
</protein>
<gene>
    <name type="primary">IPL1</name>
    <name type="ordered locus">ECU07_0360</name>
</gene>
<proteinExistence type="inferred from homology"/>
<accession>Q8SRL5</accession>
<dbReference type="EC" id="2.7.11.1" evidence="3"/>
<dbReference type="EMBL" id="AL590447">
    <property type="protein sequence ID" value="CAD25568.1"/>
    <property type="molecule type" value="Genomic_DNA"/>
</dbReference>
<dbReference type="RefSeq" id="NP_585964.1">
    <property type="nucleotide sequence ID" value="NM_001041586.1"/>
</dbReference>
<dbReference type="SMR" id="Q8SRL5"/>
<dbReference type="FunCoup" id="Q8SRL5">
    <property type="interactions" value="150"/>
</dbReference>
<dbReference type="STRING" id="284813.Q8SRL5"/>
<dbReference type="GeneID" id="859393"/>
<dbReference type="KEGG" id="ecu:ECU07_0360"/>
<dbReference type="VEuPathDB" id="MicrosporidiaDB:ECU07_0360"/>
<dbReference type="HOGENOM" id="CLU_000288_63_0_1"/>
<dbReference type="InParanoid" id="Q8SRL5"/>
<dbReference type="OMA" id="ESRFPEW"/>
<dbReference type="OrthoDB" id="377346at2759"/>
<dbReference type="Proteomes" id="UP000000819">
    <property type="component" value="Chromosome VII"/>
</dbReference>
<dbReference type="GO" id="GO:0005737">
    <property type="term" value="C:cytoplasm"/>
    <property type="evidence" value="ECO:0007669"/>
    <property type="project" value="UniProtKB-KW"/>
</dbReference>
<dbReference type="GO" id="GO:0000776">
    <property type="term" value="C:kinetochore"/>
    <property type="evidence" value="ECO:0007669"/>
    <property type="project" value="UniProtKB-KW"/>
</dbReference>
<dbReference type="GO" id="GO:0005634">
    <property type="term" value="C:nucleus"/>
    <property type="evidence" value="ECO:0007669"/>
    <property type="project" value="UniProtKB-SubCell"/>
</dbReference>
<dbReference type="GO" id="GO:0005819">
    <property type="term" value="C:spindle"/>
    <property type="evidence" value="ECO:0007669"/>
    <property type="project" value="UniProtKB-SubCell"/>
</dbReference>
<dbReference type="GO" id="GO:0005524">
    <property type="term" value="F:ATP binding"/>
    <property type="evidence" value="ECO:0007669"/>
    <property type="project" value="UniProtKB-KW"/>
</dbReference>
<dbReference type="GO" id="GO:0106310">
    <property type="term" value="F:protein serine kinase activity"/>
    <property type="evidence" value="ECO:0007669"/>
    <property type="project" value="RHEA"/>
</dbReference>
<dbReference type="GO" id="GO:0004674">
    <property type="term" value="F:protein serine/threonine kinase activity"/>
    <property type="evidence" value="ECO:0007669"/>
    <property type="project" value="UniProtKB-KW"/>
</dbReference>
<dbReference type="GO" id="GO:0007059">
    <property type="term" value="P:chromosome segregation"/>
    <property type="evidence" value="ECO:0007669"/>
    <property type="project" value="UniProtKB-KW"/>
</dbReference>
<dbReference type="CDD" id="cd14007">
    <property type="entry name" value="STKc_Aurora"/>
    <property type="match status" value="1"/>
</dbReference>
<dbReference type="FunFam" id="3.30.200.20:FF:000042">
    <property type="entry name" value="Aurora kinase A"/>
    <property type="match status" value="1"/>
</dbReference>
<dbReference type="FunFam" id="1.10.510.10:FF:000235">
    <property type="entry name" value="Serine/threonine-protein kinase ark1"/>
    <property type="match status" value="1"/>
</dbReference>
<dbReference type="Gene3D" id="1.10.510.10">
    <property type="entry name" value="Transferase(Phosphotransferase) domain 1"/>
    <property type="match status" value="1"/>
</dbReference>
<dbReference type="InterPro" id="IPR030616">
    <property type="entry name" value="Aur-like"/>
</dbReference>
<dbReference type="InterPro" id="IPR011009">
    <property type="entry name" value="Kinase-like_dom_sf"/>
</dbReference>
<dbReference type="InterPro" id="IPR000719">
    <property type="entry name" value="Prot_kinase_dom"/>
</dbReference>
<dbReference type="InterPro" id="IPR017441">
    <property type="entry name" value="Protein_kinase_ATP_BS"/>
</dbReference>
<dbReference type="InterPro" id="IPR008271">
    <property type="entry name" value="Ser/Thr_kinase_AS"/>
</dbReference>
<dbReference type="PANTHER" id="PTHR24350">
    <property type="entry name" value="SERINE/THREONINE-PROTEIN KINASE IAL-RELATED"/>
    <property type="match status" value="1"/>
</dbReference>
<dbReference type="Pfam" id="PF00069">
    <property type="entry name" value="Pkinase"/>
    <property type="match status" value="1"/>
</dbReference>
<dbReference type="SMART" id="SM00220">
    <property type="entry name" value="S_TKc"/>
    <property type="match status" value="1"/>
</dbReference>
<dbReference type="SUPFAM" id="SSF56112">
    <property type="entry name" value="Protein kinase-like (PK-like)"/>
    <property type="match status" value="1"/>
</dbReference>
<dbReference type="PROSITE" id="PS00107">
    <property type="entry name" value="PROTEIN_KINASE_ATP"/>
    <property type="match status" value="1"/>
</dbReference>
<dbReference type="PROSITE" id="PS50011">
    <property type="entry name" value="PROTEIN_KINASE_DOM"/>
    <property type="match status" value="1"/>
</dbReference>
<dbReference type="PROSITE" id="PS00108">
    <property type="entry name" value="PROTEIN_KINASE_ST"/>
    <property type="match status" value="1"/>
</dbReference>
<keyword id="KW-0067">ATP-binding</keyword>
<keyword id="KW-0131">Cell cycle</keyword>
<keyword id="KW-0137">Centromere</keyword>
<keyword id="KW-0158">Chromosome</keyword>
<keyword id="KW-0159">Chromosome partition</keyword>
<keyword id="KW-0963">Cytoplasm</keyword>
<keyword id="KW-0206">Cytoskeleton</keyword>
<keyword id="KW-0418">Kinase</keyword>
<keyword id="KW-0995">Kinetochore</keyword>
<keyword id="KW-0547">Nucleotide-binding</keyword>
<keyword id="KW-0539">Nucleus</keyword>
<keyword id="KW-1185">Reference proteome</keyword>
<keyword id="KW-0723">Serine/threonine-protein kinase</keyword>
<keyword id="KW-0808">Transferase</keyword>
<evidence type="ECO:0000250" key="1"/>
<evidence type="ECO:0000250" key="2">
    <source>
        <dbReference type="UniProtKB" id="D6W3G1"/>
    </source>
</evidence>
<evidence type="ECO:0000250" key="3">
    <source>
        <dbReference type="UniProtKB" id="P38991"/>
    </source>
</evidence>
<evidence type="ECO:0000255" key="4">
    <source>
        <dbReference type="PROSITE-ProRule" id="PRU00159"/>
    </source>
</evidence>
<evidence type="ECO:0000255" key="5">
    <source>
        <dbReference type="PROSITE-ProRule" id="PRU10027"/>
    </source>
</evidence>
<reference key="1">
    <citation type="journal article" date="2001" name="Nature">
        <title>Genome sequence and gene compaction of the eukaryote parasite Encephalitozoon cuniculi.</title>
        <authorList>
            <person name="Katinka M.D."/>
            <person name="Duprat S."/>
            <person name="Cornillot E."/>
            <person name="Metenier G."/>
            <person name="Thomarat F."/>
            <person name="Prensier G."/>
            <person name="Barbe V."/>
            <person name="Peyretaillade E."/>
            <person name="Brottier P."/>
            <person name="Wincker P."/>
            <person name="Delbac F."/>
            <person name="El Alaoui H."/>
            <person name="Peyret P."/>
            <person name="Saurin W."/>
            <person name="Gouy M."/>
            <person name="Weissenbach J."/>
            <person name="Vivares C.P."/>
        </authorList>
    </citation>
    <scope>NUCLEOTIDE SEQUENCE [LARGE SCALE GENOMIC DNA]</scope>
    <source>
        <strain>GB-M1</strain>
    </source>
</reference>
<reference key="2">
    <citation type="journal article" date="2007" name="BMC Genomics">
        <title>The complement of protein kinases of the microsporidium Encephalitozoon cuniculi in relation to those of Saccharomyces cerevisiae and Schizosaccharomyces pombe.</title>
        <authorList>
            <person name="Miranda-Saavedra D."/>
            <person name="Stark M.J.R."/>
            <person name="Packer J.C."/>
            <person name="Vivares C.P."/>
            <person name="Doerig C."/>
            <person name="Barton G.J."/>
        </authorList>
    </citation>
    <scope>PREDICTION OF FUNCTION</scope>
</reference>
<comment type="function">
    <text evidence="3">Component of the chromosomal passenger complex (CPC), a complex that acts as a key regulator of chromosome segregation and cytokinesis. Has a role in error-correction of aberrent kinetochore-microtubule attachments to ensure that sister kinetochores become bioriented and connect to opposite poles by promoting spindle assembly checkpoint signaling.</text>
</comment>
<comment type="catalytic activity">
    <reaction evidence="2">
        <text>L-seryl-[protein] + ATP = O-phospho-L-seryl-[protein] + ADP + H(+)</text>
        <dbReference type="Rhea" id="RHEA:17989"/>
        <dbReference type="Rhea" id="RHEA-COMP:9863"/>
        <dbReference type="Rhea" id="RHEA-COMP:11604"/>
        <dbReference type="ChEBI" id="CHEBI:15378"/>
        <dbReference type="ChEBI" id="CHEBI:29999"/>
        <dbReference type="ChEBI" id="CHEBI:30616"/>
        <dbReference type="ChEBI" id="CHEBI:83421"/>
        <dbReference type="ChEBI" id="CHEBI:456216"/>
        <dbReference type="EC" id="2.7.11.1"/>
    </reaction>
</comment>
<comment type="catalytic activity">
    <reaction>
        <text>L-threonyl-[protein] + ATP = O-phospho-L-threonyl-[protein] + ADP + H(+)</text>
        <dbReference type="Rhea" id="RHEA:46608"/>
        <dbReference type="Rhea" id="RHEA-COMP:11060"/>
        <dbReference type="Rhea" id="RHEA-COMP:11605"/>
        <dbReference type="ChEBI" id="CHEBI:15378"/>
        <dbReference type="ChEBI" id="CHEBI:30013"/>
        <dbReference type="ChEBI" id="CHEBI:30616"/>
        <dbReference type="ChEBI" id="CHEBI:61977"/>
        <dbReference type="ChEBI" id="CHEBI:456216"/>
        <dbReference type="EC" id="2.7.11.1"/>
    </reaction>
</comment>
<comment type="subcellular location">
    <subcellularLocation>
        <location evidence="1">Nucleus</location>
    </subcellularLocation>
    <subcellularLocation>
        <location evidence="1">Cytoplasm</location>
        <location evidence="1">Cytoskeleton</location>
        <location evidence="1">Spindle</location>
    </subcellularLocation>
    <subcellularLocation>
        <location evidence="1">Chromosome</location>
        <location evidence="1">Centromere</location>
        <location evidence="1">Kinetochore</location>
    </subcellularLocation>
</comment>
<comment type="similarity">
    <text evidence="4">Belongs to the protein kinase superfamily. Ser/Thr protein kinase family. Aurora subfamily.</text>
</comment>
<feature type="chain" id="PRO_0000384423" description="Aurora kinase">
    <location>
        <begin position="1"/>
        <end position="272"/>
    </location>
</feature>
<feature type="domain" description="Protein kinase" evidence="4">
    <location>
        <begin position="10"/>
        <end position="263"/>
    </location>
</feature>
<feature type="active site" description="Proton acceptor" evidence="4 5">
    <location>
        <position position="134"/>
    </location>
</feature>
<feature type="binding site" evidence="4">
    <location>
        <begin position="16"/>
        <end position="24"/>
    </location>
    <ligand>
        <name>ATP</name>
        <dbReference type="ChEBI" id="CHEBI:30616"/>
    </ligand>
</feature>
<feature type="binding site" evidence="4">
    <location>
        <position position="39"/>
    </location>
    <ligand>
        <name>ATP</name>
        <dbReference type="ChEBI" id="CHEBI:30616"/>
    </ligand>
</feature>
<name>AURK_ENCCU</name>